<dbReference type="EMBL" id="BA000019">
    <property type="protein sequence ID" value="BAB76952.1"/>
    <property type="molecule type" value="Genomic_DNA"/>
</dbReference>
<dbReference type="PIR" id="AE2462">
    <property type="entry name" value="AE2462"/>
</dbReference>
<dbReference type="SMR" id="Q8YLP3"/>
<dbReference type="STRING" id="103690.gene:10497312"/>
<dbReference type="KEGG" id="ana:alr5253"/>
<dbReference type="eggNOG" id="COG4399">
    <property type="taxonomic scope" value="Bacteria"/>
</dbReference>
<dbReference type="Proteomes" id="UP000002483">
    <property type="component" value="Chromosome"/>
</dbReference>
<dbReference type="GO" id="GO:0005886">
    <property type="term" value="C:plasma membrane"/>
    <property type="evidence" value="ECO:0007669"/>
    <property type="project" value="UniProtKB-SubCell"/>
</dbReference>
<dbReference type="InterPro" id="IPR007383">
    <property type="entry name" value="DUF445"/>
</dbReference>
<dbReference type="InterPro" id="IPR016991">
    <property type="entry name" value="UCP032178"/>
</dbReference>
<dbReference type="PANTHER" id="PTHR35791">
    <property type="entry name" value="UPF0754 MEMBRANE PROTEIN YHEB"/>
    <property type="match status" value="1"/>
</dbReference>
<dbReference type="PANTHER" id="PTHR35791:SF1">
    <property type="entry name" value="UPF0754 MEMBRANE PROTEIN YHEB"/>
    <property type="match status" value="1"/>
</dbReference>
<dbReference type="Pfam" id="PF04286">
    <property type="entry name" value="DUF445"/>
    <property type="match status" value="1"/>
</dbReference>
<dbReference type="PIRSF" id="PIRSF032178">
    <property type="entry name" value="UCP032178"/>
    <property type="match status" value="1"/>
</dbReference>
<organism>
    <name type="scientific">Nostoc sp. (strain PCC 7120 / SAG 25.82 / UTEX 2576)</name>
    <dbReference type="NCBI Taxonomy" id="103690"/>
    <lineage>
        <taxon>Bacteria</taxon>
        <taxon>Bacillati</taxon>
        <taxon>Cyanobacteriota</taxon>
        <taxon>Cyanophyceae</taxon>
        <taxon>Nostocales</taxon>
        <taxon>Nostocaceae</taxon>
        <taxon>Nostoc</taxon>
    </lineage>
</organism>
<comment type="subcellular location">
    <subcellularLocation>
        <location evidence="1">Cell inner membrane</location>
        <topology evidence="1">Multi-pass membrane protein</topology>
    </subcellularLocation>
</comment>
<comment type="similarity">
    <text evidence="3">Belongs to the UPF0754 family.</text>
</comment>
<protein>
    <recommendedName>
        <fullName>UPF0754 membrane protein alr5253</fullName>
    </recommendedName>
</protein>
<evidence type="ECO:0000250" key="1"/>
<evidence type="ECO:0000255" key="2"/>
<evidence type="ECO:0000305" key="3"/>
<keyword id="KW-0997">Cell inner membrane</keyword>
<keyword id="KW-1003">Cell membrane</keyword>
<keyword id="KW-0472">Membrane</keyword>
<keyword id="KW-1185">Reference proteome</keyword>
<keyword id="KW-0812">Transmembrane</keyword>
<keyword id="KW-1133">Transmembrane helix</keyword>
<proteinExistence type="inferred from homology"/>
<accession>Q8YLP3</accession>
<name>Y5253_NOSS1</name>
<feature type="chain" id="PRO_0000388261" description="UPF0754 membrane protein alr5253">
    <location>
        <begin position="1"/>
        <end position="418"/>
    </location>
</feature>
<feature type="transmembrane region" description="Helical" evidence="2">
    <location>
        <begin position="10"/>
        <end position="30"/>
    </location>
</feature>
<feature type="transmembrane region" description="Helical" evidence="2">
    <location>
        <begin position="394"/>
        <end position="414"/>
    </location>
</feature>
<reference key="1">
    <citation type="journal article" date="2001" name="DNA Res.">
        <title>Complete genomic sequence of the filamentous nitrogen-fixing cyanobacterium Anabaena sp. strain PCC 7120.</title>
        <authorList>
            <person name="Kaneko T."/>
            <person name="Nakamura Y."/>
            <person name="Wolk C.P."/>
            <person name="Kuritz T."/>
            <person name="Sasamoto S."/>
            <person name="Watanabe A."/>
            <person name="Iriguchi M."/>
            <person name="Ishikawa A."/>
            <person name="Kawashima K."/>
            <person name="Kimura T."/>
            <person name="Kishida Y."/>
            <person name="Kohara M."/>
            <person name="Matsumoto M."/>
            <person name="Matsuno A."/>
            <person name="Muraki A."/>
            <person name="Nakazaki N."/>
            <person name="Shimpo S."/>
            <person name="Sugimoto M."/>
            <person name="Takazawa M."/>
            <person name="Yamada M."/>
            <person name="Yasuda M."/>
            <person name="Tabata S."/>
        </authorList>
    </citation>
    <scope>NUCLEOTIDE SEQUENCE [LARGE SCALE GENOMIC DNA]</scope>
    <source>
        <strain>PCC 7120 / SAG 25.82 / UTEX 2576</strain>
    </source>
</reference>
<gene>
    <name type="ordered locus">alr5253</name>
</gene>
<sequence>MPNPKKTVNWSHLWLYVSPPILGGIIGYFTNDIAIKMLFRPYRAIYIGGRRVPFTPGLIPRNQERLAKNISDTIMGSLLTPDELQKLARRLLKTERVQGAILWLLQLAIDQIKTDTDKKSAKIVAGILRDLIGESLPRLLKVLARREDFLEAQINQIFDQILLELQLSEEQASRLADWFLEVVLPPDVIRQAIVDFLTDRTIQIIDESFREKTSGTYWVVANLFGLRNTLTRLRTFCLDEKEATNNRLTELIQDLQMRDRFRKILQNLTLQNLPIGTVRQLRKTTRETVRQYVQTSGSDLLQGLTDSINWENIAELLLNRLSNSPVVISSLEVVSQELALILERYLEKDLEAIVAQVIPILSIDQVIVDRVKSTSPADLEAAIEGIVKNELQAIVSLGGILGLIVGLFQTAFFIFSQQ</sequence>